<sequence length="495" mass="57423">MSEEMNDQMQVRRQKLQELIDLGIDPFGHRFNRSSTSSELKEQWDQFSKEELHEKEDESHVSIAGRLMTKRGKGKAGFAHIQDLKGQIQIYVRKDQVGDDQFNIWKMADLGDIIGVEGVMFKTNTGEISVKAKSFTLLSKSLRPLPDKFHGLQDIEQRYRQRYLDLITNEDSTQTFINRSKIIQEMRNYLNKQGFLEVETPMMHQIAGGAAARPFVTHHNALDATLYMRIAIELHLKRLIVGGLEKVYEIGRVFRNEGVSTRHNPEFTMIELYEAYADYHDIMDLTENMVRHIAQEVFGSAKVQYNDEEIDLESSWKRLHIVDAVKEVTGVDFYNVNSDEEAIRLAKEHDIEITENMKYGHILNEFFEQKVEETLIQPTFIYGHPIEISPLAKKNPNDERFTDRFELFIVGREHANAFTELNDPIDQRQRFEAQLVEKEQGNDEAHDMDEDYIEALEYGMPPTGGLGIGIDRLVMLLTDSPSIRDVLLFPYMRQK</sequence>
<name>SYK_STAEQ</name>
<accession>Q5HRN7</accession>
<organism>
    <name type="scientific">Staphylococcus epidermidis (strain ATCC 35984 / DSM 28319 / BCRC 17069 / CCUG 31568 / BM 3577 / RP62A)</name>
    <dbReference type="NCBI Taxonomy" id="176279"/>
    <lineage>
        <taxon>Bacteria</taxon>
        <taxon>Bacillati</taxon>
        <taxon>Bacillota</taxon>
        <taxon>Bacilli</taxon>
        <taxon>Bacillales</taxon>
        <taxon>Staphylococcaceae</taxon>
        <taxon>Staphylococcus</taxon>
    </lineage>
</organism>
<proteinExistence type="inferred from homology"/>
<reference key="1">
    <citation type="journal article" date="2005" name="J. Bacteriol.">
        <title>Insights on evolution of virulence and resistance from the complete genome analysis of an early methicillin-resistant Staphylococcus aureus strain and a biofilm-producing methicillin-resistant Staphylococcus epidermidis strain.</title>
        <authorList>
            <person name="Gill S.R."/>
            <person name="Fouts D.E."/>
            <person name="Archer G.L."/>
            <person name="Mongodin E.F."/>
            <person name="DeBoy R.T."/>
            <person name="Ravel J."/>
            <person name="Paulsen I.T."/>
            <person name="Kolonay J.F."/>
            <person name="Brinkac L.M."/>
            <person name="Beanan M.J."/>
            <person name="Dodson R.J."/>
            <person name="Daugherty S.C."/>
            <person name="Madupu R."/>
            <person name="Angiuoli S.V."/>
            <person name="Durkin A.S."/>
            <person name="Haft D.H."/>
            <person name="Vamathevan J.J."/>
            <person name="Khouri H."/>
            <person name="Utterback T.R."/>
            <person name="Lee C."/>
            <person name="Dimitrov G."/>
            <person name="Jiang L."/>
            <person name="Qin H."/>
            <person name="Weidman J."/>
            <person name="Tran K."/>
            <person name="Kang K.H."/>
            <person name="Hance I.R."/>
            <person name="Nelson K.E."/>
            <person name="Fraser C.M."/>
        </authorList>
    </citation>
    <scope>NUCLEOTIDE SEQUENCE [LARGE SCALE GENOMIC DNA]</scope>
    <source>
        <strain>ATCC 35984 / DSM 28319 / BCRC 17069 / CCUG 31568 / BM 3577 / RP62A</strain>
    </source>
</reference>
<comment type="catalytic activity">
    <reaction evidence="1">
        <text>tRNA(Lys) + L-lysine + ATP = L-lysyl-tRNA(Lys) + AMP + diphosphate</text>
        <dbReference type="Rhea" id="RHEA:20792"/>
        <dbReference type="Rhea" id="RHEA-COMP:9696"/>
        <dbReference type="Rhea" id="RHEA-COMP:9697"/>
        <dbReference type="ChEBI" id="CHEBI:30616"/>
        <dbReference type="ChEBI" id="CHEBI:32551"/>
        <dbReference type="ChEBI" id="CHEBI:33019"/>
        <dbReference type="ChEBI" id="CHEBI:78442"/>
        <dbReference type="ChEBI" id="CHEBI:78529"/>
        <dbReference type="ChEBI" id="CHEBI:456215"/>
        <dbReference type="EC" id="6.1.1.6"/>
    </reaction>
</comment>
<comment type="cofactor">
    <cofactor evidence="1">
        <name>Mg(2+)</name>
        <dbReference type="ChEBI" id="CHEBI:18420"/>
    </cofactor>
    <text evidence="1">Binds 3 Mg(2+) ions per subunit.</text>
</comment>
<comment type="subunit">
    <text evidence="1">Homodimer.</text>
</comment>
<comment type="subcellular location">
    <subcellularLocation>
        <location evidence="1">Cytoplasm</location>
    </subcellularLocation>
</comment>
<comment type="similarity">
    <text evidence="1">Belongs to the class-II aminoacyl-tRNA synthetase family.</text>
</comment>
<evidence type="ECO:0000255" key="1">
    <source>
        <dbReference type="HAMAP-Rule" id="MF_00252"/>
    </source>
</evidence>
<gene>
    <name evidence="1" type="primary">lysS</name>
    <name type="ordered locus">SERP0156</name>
</gene>
<feature type="chain" id="PRO_0000152683" description="Lysine--tRNA ligase">
    <location>
        <begin position="1"/>
        <end position="495"/>
    </location>
</feature>
<feature type="binding site" evidence="1">
    <location>
        <position position="406"/>
    </location>
    <ligand>
        <name>Mg(2+)</name>
        <dbReference type="ChEBI" id="CHEBI:18420"/>
        <label>1</label>
    </ligand>
</feature>
<feature type="binding site" evidence="1">
    <location>
        <position position="413"/>
    </location>
    <ligand>
        <name>Mg(2+)</name>
        <dbReference type="ChEBI" id="CHEBI:18420"/>
        <label>1</label>
    </ligand>
</feature>
<feature type="binding site" evidence="1">
    <location>
        <position position="413"/>
    </location>
    <ligand>
        <name>Mg(2+)</name>
        <dbReference type="ChEBI" id="CHEBI:18420"/>
        <label>2</label>
    </ligand>
</feature>
<keyword id="KW-0030">Aminoacyl-tRNA synthetase</keyword>
<keyword id="KW-0067">ATP-binding</keyword>
<keyword id="KW-0963">Cytoplasm</keyword>
<keyword id="KW-0436">Ligase</keyword>
<keyword id="KW-0460">Magnesium</keyword>
<keyword id="KW-0479">Metal-binding</keyword>
<keyword id="KW-0547">Nucleotide-binding</keyword>
<keyword id="KW-0648">Protein biosynthesis</keyword>
<keyword id="KW-1185">Reference proteome</keyword>
<protein>
    <recommendedName>
        <fullName evidence="1">Lysine--tRNA ligase</fullName>
        <ecNumber evidence="1">6.1.1.6</ecNumber>
    </recommendedName>
    <alternativeName>
        <fullName evidence="1">Lysyl-tRNA synthetase</fullName>
        <shortName evidence="1">LysRS</shortName>
    </alternativeName>
</protein>
<dbReference type="EC" id="6.1.1.6" evidence="1"/>
<dbReference type="EMBL" id="CP000029">
    <property type="protein sequence ID" value="AAW53533.1"/>
    <property type="molecule type" value="Genomic_DNA"/>
</dbReference>
<dbReference type="RefSeq" id="WP_001833056.1">
    <property type="nucleotide sequence ID" value="NC_002976.3"/>
</dbReference>
<dbReference type="SMR" id="Q5HRN7"/>
<dbReference type="STRING" id="176279.SERP0156"/>
<dbReference type="GeneID" id="50019572"/>
<dbReference type="KEGG" id="ser:SERP0156"/>
<dbReference type="eggNOG" id="COG1190">
    <property type="taxonomic scope" value="Bacteria"/>
</dbReference>
<dbReference type="HOGENOM" id="CLU_008255_6_0_9"/>
<dbReference type="Proteomes" id="UP000000531">
    <property type="component" value="Chromosome"/>
</dbReference>
<dbReference type="GO" id="GO:0005829">
    <property type="term" value="C:cytosol"/>
    <property type="evidence" value="ECO:0007669"/>
    <property type="project" value="TreeGrafter"/>
</dbReference>
<dbReference type="GO" id="GO:0005524">
    <property type="term" value="F:ATP binding"/>
    <property type="evidence" value="ECO:0007669"/>
    <property type="project" value="UniProtKB-UniRule"/>
</dbReference>
<dbReference type="GO" id="GO:0140096">
    <property type="term" value="F:catalytic activity, acting on a protein"/>
    <property type="evidence" value="ECO:0007669"/>
    <property type="project" value="UniProtKB-ARBA"/>
</dbReference>
<dbReference type="GO" id="GO:0004824">
    <property type="term" value="F:lysine-tRNA ligase activity"/>
    <property type="evidence" value="ECO:0007669"/>
    <property type="project" value="UniProtKB-UniRule"/>
</dbReference>
<dbReference type="GO" id="GO:0000287">
    <property type="term" value="F:magnesium ion binding"/>
    <property type="evidence" value="ECO:0007669"/>
    <property type="project" value="UniProtKB-UniRule"/>
</dbReference>
<dbReference type="GO" id="GO:0016740">
    <property type="term" value="F:transferase activity"/>
    <property type="evidence" value="ECO:0007669"/>
    <property type="project" value="UniProtKB-ARBA"/>
</dbReference>
<dbReference type="GO" id="GO:0000049">
    <property type="term" value="F:tRNA binding"/>
    <property type="evidence" value="ECO:0007669"/>
    <property type="project" value="TreeGrafter"/>
</dbReference>
<dbReference type="GO" id="GO:0006430">
    <property type="term" value="P:lysyl-tRNA aminoacylation"/>
    <property type="evidence" value="ECO:0007669"/>
    <property type="project" value="UniProtKB-UniRule"/>
</dbReference>
<dbReference type="CDD" id="cd00775">
    <property type="entry name" value="LysRS_core"/>
    <property type="match status" value="1"/>
</dbReference>
<dbReference type="CDD" id="cd04322">
    <property type="entry name" value="LysRS_N"/>
    <property type="match status" value="1"/>
</dbReference>
<dbReference type="FunFam" id="2.40.50.140:FF:000024">
    <property type="entry name" value="Lysine--tRNA ligase"/>
    <property type="match status" value="1"/>
</dbReference>
<dbReference type="FunFam" id="3.30.930.10:FF:000001">
    <property type="entry name" value="Lysine--tRNA ligase"/>
    <property type="match status" value="1"/>
</dbReference>
<dbReference type="Gene3D" id="3.30.930.10">
    <property type="entry name" value="Bira Bifunctional Protein, Domain 2"/>
    <property type="match status" value="1"/>
</dbReference>
<dbReference type="Gene3D" id="2.40.50.140">
    <property type="entry name" value="Nucleic acid-binding proteins"/>
    <property type="match status" value="1"/>
</dbReference>
<dbReference type="HAMAP" id="MF_00252">
    <property type="entry name" value="Lys_tRNA_synth_class2"/>
    <property type="match status" value="1"/>
</dbReference>
<dbReference type="InterPro" id="IPR004364">
    <property type="entry name" value="Aa-tRNA-synt_II"/>
</dbReference>
<dbReference type="InterPro" id="IPR006195">
    <property type="entry name" value="aa-tRNA-synth_II"/>
</dbReference>
<dbReference type="InterPro" id="IPR045864">
    <property type="entry name" value="aa-tRNA-synth_II/BPL/LPL"/>
</dbReference>
<dbReference type="InterPro" id="IPR002313">
    <property type="entry name" value="Lys-tRNA-ligase_II"/>
</dbReference>
<dbReference type="InterPro" id="IPR034762">
    <property type="entry name" value="Lys-tRNA-ligase_II_bac/euk"/>
</dbReference>
<dbReference type="InterPro" id="IPR044136">
    <property type="entry name" value="Lys-tRNA-ligase_II_N"/>
</dbReference>
<dbReference type="InterPro" id="IPR018149">
    <property type="entry name" value="Lys-tRNA-synth_II_C"/>
</dbReference>
<dbReference type="InterPro" id="IPR012340">
    <property type="entry name" value="NA-bd_OB-fold"/>
</dbReference>
<dbReference type="InterPro" id="IPR004365">
    <property type="entry name" value="NA-bd_OB_tRNA"/>
</dbReference>
<dbReference type="NCBIfam" id="TIGR00499">
    <property type="entry name" value="lysS_bact"/>
    <property type="match status" value="1"/>
</dbReference>
<dbReference type="NCBIfam" id="NF001756">
    <property type="entry name" value="PRK00484.1"/>
    <property type="match status" value="1"/>
</dbReference>
<dbReference type="PANTHER" id="PTHR42918:SF15">
    <property type="entry name" value="LYSINE--TRNA LIGASE, CHLOROPLASTIC_MITOCHONDRIAL"/>
    <property type="match status" value="1"/>
</dbReference>
<dbReference type="PANTHER" id="PTHR42918">
    <property type="entry name" value="LYSYL-TRNA SYNTHETASE"/>
    <property type="match status" value="1"/>
</dbReference>
<dbReference type="Pfam" id="PF00152">
    <property type="entry name" value="tRNA-synt_2"/>
    <property type="match status" value="1"/>
</dbReference>
<dbReference type="Pfam" id="PF01336">
    <property type="entry name" value="tRNA_anti-codon"/>
    <property type="match status" value="1"/>
</dbReference>
<dbReference type="PIRSF" id="PIRSF039101">
    <property type="entry name" value="LysRS2"/>
    <property type="match status" value="1"/>
</dbReference>
<dbReference type="PRINTS" id="PR00982">
    <property type="entry name" value="TRNASYNTHLYS"/>
</dbReference>
<dbReference type="SUPFAM" id="SSF55681">
    <property type="entry name" value="Class II aaRS and biotin synthetases"/>
    <property type="match status" value="1"/>
</dbReference>
<dbReference type="SUPFAM" id="SSF50249">
    <property type="entry name" value="Nucleic acid-binding proteins"/>
    <property type="match status" value="1"/>
</dbReference>
<dbReference type="PROSITE" id="PS50862">
    <property type="entry name" value="AA_TRNA_LIGASE_II"/>
    <property type="match status" value="1"/>
</dbReference>